<gene>
    <name evidence="1" type="primary">pcn</name>
    <name type="ordered locus">CENSYa_1422</name>
</gene>
<name>PCNA_CENSY</name>
<dbReference type="EMBL" id="DP000238">
    <property type="protein sequence ID" value="ABK78044.1"/>
    <property type="molecule type" value="Genomic_DNA"/>
</dbReference>
<dbReference type="SMR" id="A0RXH7"/>
<dbReference type="STRING" id="414004.CENSYa_1422"/>
<dbReference type="EnsemblBacteria" id="ABK78044">
    <property type="protein sequence ID" value="ABK78044"/>
    <property type="gene ID" value="CENSYa_1422"/>
</dbReference>
<dbReference type="KEGG" id="csy:CENSYa_1422"/>
<dbReference type="PATRIC" id="fig|414004.10.peg.1305"/>
<dbReference type="HOGENOM" id="CLU_043978_3_0_2"/>
<dbReference type="Proteomes" id="UP000000758">
    <property type="component" value="Chromosome"/>
</dbReference>
<dbReference type="GO" id="GO:0003677">
    <property type="term" value="F:DNA binding"/>
    <property type="evidence" value="ECO:0007669"/>
    <property type="project" value="UniProtKB-UniRule"/>
</dbReference>
<dbReference type="GO" id="GO:0030337">
    <property type="term" value="F:DNA polymerase processivity factor activity"/>
    <property type="evidence" value="ECO:0007669"/>
    <property type="project" value="UniProtKB-UniRule"/>
</dbReference>
<dbReference type="GO" id="GO:0006272">
    <property type="term" value="P:leading strand elongation"/>
    <property type="evidence" value="ECO:0007669"/>
    <property type="project" value="TreeGrafter"/>
</dbReference>
<dbReference type="GO" id="GO:0006275">
    <property type="term" value="P:regulation of DNA replication"/>
    <property type="evidence" value="ECO:0007669"/>
    <property type="project" value="UniProtKB-UniRule"/>
</dbReference>
<dbReference type="CDD" id="cd00577">
    <property type="entry name" value="PCNA"/>
    <property type="match status" value="1"/>
</dbReference>
<dbReference type="Gene3D" id="3.70.10.10">
    <property type="match status" value="1"/>
</dbReference>
<dbReference type="HAMAP" id="MF_00317">
    <property type="entry name" value="DNApol_clamp_arch"/>
    <property type="match status" value="1"/>
</dbReference>
<dbReference type="InterPro" id="IPR046938">
    <property type="entry name" value="DNA_clamp_sf"/>
</dbReference>
<dbReference type="InterPro" id="IPR000730">
    <property type="entry name" value="Pr_cel_nuc_antig"/>
</dbReference>
<dbReference type="InterPro" id="IPR022649">
    <property type="entry name" value="Pr_cel_nuc_antig_C"/>
</dbReference>
<dbReference type="InterPro" id="IPR022648">
    <property type="entry name" value="Pr_cel_nuc_antig_N"/>
</dbReference>
<dbReference type="NCBIfam" id="TIGR00590">
    <property type="entry name" value="pcna"/>
    <property type="match status" value="1"/>
</dbReference>
<dbReference type="PANTHER" id="PTHR11352">
    <property type="entry name" value="PROLIFERATING CELL NUCLEAR ANTIGEN"/>
    <property type="match status" value="1"/>
</dbReference>
<dbReference type="PANTHER" id="PTHR11352:SF0">
    <property type="entry name" value="PROLIFERATING CELL NUCLEAR ANTIGEN"/>
    <property type="match status" value="1"/>
</dbReference>
<dbReference type="Pfam" id="PF02747">
    <property type="entry name" value="PCNA_C"/>
    <property type="match status" value="1"/>
</dbReference>
<dbReference type="Pfam" id="PF00705">
    <property type="entry name" value="PCNA_N"/>
    <property type="match status" value="1"/>
</dbReference>
<dbReference type="PRINTS" id="PR00339">
    <property type="entry name" value="PCNACYCLIN"/>
</dbReference>
<dbReference type="SUPFAM" id="SSF55979">
    <property type="entry name" value="DNA clamp"/>
    <property type="match status" value="2"/>
</dbReference>
<feature type="chain" id="PRO_0000336043" description="DNA polymerase sliding clamp">
    <location>
        <begin position="1"/>
        <end position="248"/>
    </location>
</feature>
<accession>A0RXH7</accession>
<sequence>MAFSAKTSGSDDLKAIISAISTLVEEATFVATAEGITFRGMDPSHVALIDISWPNSAFEKYECDSNIKFGVRIDEFTKLIKRADKKDSITISVSKDSMLLIDIGSNKKYKIRLIESSATDTPLPKISYDAKIELATTSFEKILGDVQVVSDYLTIKAKPTGVEFAGKGDSGEAAIDVKKDDDSMEALKVKKESEGTYSLEYLNPIVRAVGGAAGSVTCEFSDAKPLRVEFKVANIGRIHFYLAPRVSS</sequence>
<organism>
    <name type="scientific">Cenarchaeum symbiosum (strain A)</name>
    <dbReference type="NCBI Taxonomy" id="414004"/>
    <lineage>
        <taxon>Archaea</taxon>
        <taxon>Nitrososphaerota</taxon>
        <taxon>Candidatus Cenarchaeales</taxon>
        <taxon>Candidatus Cenarchaeaceae</taxon>
        <taxon>Candidatus Cenarchaeum</taxon>
    </lineage>
</organism>
<evidence type="ECO:0000255" key="1">
    <source>
        <dbReference type="HAMAP-Rule" id="MF_00317"/>
    </source>
</evidence>
<keyword id="KW-0235">DNA replication</keyword>
<keyword id="KW-0238">DNA-binding</keyword>
<keyword id="KW-1185">Reference proteome</keyword>
<proteinExistence type="inferred from homology"/>
<protein>
    <recommendedName>
        <fullName evidence="1">DNA polymerase sliding clamp</fullName>
    </recommendedName>
    <alternativeName>
        <fullName evidence="1">Proliferating cell nuclear antigen homolog</fullName>
        <shortName evidence="1">PCNA</shortName>
    </alternativeName>
</protein>
<reference key="1">
    <citation type="journal article" date="2006" name="Proc. Natl. Acad. Sci. U.S.A.">
        <title>Genomic analysis of the uncultivated marine crenarchaeote Cenarchaeum symbiosum.</title>
        <authorList>
            <person name="Hallam S.J."/>
            <person name="Konstantinidis K.T."/>
            <person name="Putnam N."/>
            <person name="Schleper C."/>
            <person name="Watanabe Y."/>
            <person name="Sugahara J."/>
            <person name="Preston C."/>
            <person name="de la Torre J."/>
            <person name="Richardson P.M."/>
            <person name="DeLong E.F."/>
        </authorList>
    </citation>
    <scope>NUCLEOTIDE SEQUENCE [LARGE SCALE GENOMIC DNA]</scope>
    <source>
        <strain>A</strain>
    </source>
</reference>
<comment type="function">
    <text evidence="1">Sliding clamp subunit that acts as a moving platform for DNA processing. Responsible for tethering the catalytic subunit of DNA polymerase and other proteins to DNA during high-speed replication.</text>
</comment>
<comment type="subunit">
    <text evidence="1">Homotrimer. The subunits circularize to form a toroid; DNA passes through its center. Replication factor C (RFC) is required to load the toroid on the DNA.</text>
</comment>
<comment type="similarity">
    <text evidence="1">Belongs to the PCNA family.</text>
</comment>